<protein>
    <recommendedName>
        <fullName evidence="9">Ribonuclease MC</fullName>
        <shortName evidence="9">RNase MC</shortName>
        <shortName evidence="8">RNase MC1</shortName>
        <ecNumber evidence="2 3 5">4.6.1.19</ecNumber>
    </recommendedName>
</protein>
<name>RNMC1_MOMCH</name>
<accession>P23540</accession>
<keyword id="KW-0002">3D-structure</keyword>
<keyword id="KW-0903">Direct protein sequencing</keyword>
<keyword id="KW-1015">Disulfide bond</keyword>
<keyword id="KW-0255">Endonuclease</keyword>
<keyword id="KW-0378">Hydrolase</keyword>
<keyword id="KW-0456">Lyase</keyword>
<keyword id="KW-0540">Nuclease</keyword>
<keyword id="KW-1185">Reference proteome</keyword>
<keyword id="KW-0732">Signal</keyword>
<feature type="signal peptide" evidence="1">
    <location>
        <begin position="1"/>
        <end status="unknown"/>
    </location>
</feature>
<feature type="chain" id="PRO_0000206508" description="Ribonuclease MC">
    <location>
        <begin position="2"/>
        <end position="191"/>
    </location>
</feature>
<feature type="active site" description="Proton donor" evidence="2 6 7 11 17 18 21 23">
    <location>
        <position position="34"/>
    </location>
</feature>
<feature type="active site" evidence="5 6 7 11 17 18 19 21 23">
    <location>
        <position position="85"/>
    </location>
</feature>
<feature type="active site" description="Proton acceptor" evidence="2 6 7 11 17 18 21 23">
    <location>
        <position position="89"/>
    </location>
</feature>
<feature type="binding site" evidence="12 13 14 17 18 19 20 21 23">
    <location>
        <position position="9"/>
    </location>
    <ligand>
        <name>RNA</name>
        <dbReference type="ChEBI" id="CHEBI:33697"/>
    </ligand>
    <ligandPart>
        <name>UMP residue</name>
        <dbReference type="ChEBI" id="CHEBI:65315"/>
    </ligandPart>
</feature>
<feature type="binding site" evidence="6 7 17 18 21 23">
    <location>
        <position position="34"/>
    </location>
    <ligand>
        <name>RNA</name>
        <dbReference type="ChEBI" id="CHEBI:33697"/>
    </ligand>
    <ligandPart>
        <name>UMP residue</name>
        <dbReference type="ChEBI" id="CHEBI:65315"/>
    </ligandPart>
</feature>
<feature type="binding site" evidence="12 13 14 17 18 19 20 21 23">
    <location>
        <begin position="72"/>
        <end position="73"/>
    </location>
    <ligand>
        <name>RNA</name>
        <dbReference type="ChEBI" id="CHEBI:33697"/>
    </ligand>
    <ligandPart>
        <name>UMP residue</name>
        <dbReference type="ChEBI" id="CHEBI:65315"/>
    </ligandPart>
</feature>
<feature type="binding site" evidence="7 13 17 18 23">
    <location>
        <position position="75"/>
    </location>
    <ligand>
        <name>RNA</name>
        <dbReference type="ChEBI" id="CHEBI:33697"/>
    </ligand>
    <ligandPart>
        <name>UMP residue</name>
        <dbReference type="ChEBI" id="CHEBI:65315"/>
    </ligandPart>
</feature>
<feature type="binding site" evidence="7 12 13 18 19 21 23">
    <location>
        <position position="81"/>
    </location>
    <ligand>
        <name>RNA</name>
        <dbReference type="ChEBI" id="CHEBI:33697"/>
    </ligand>
    <ligandPart>
        <name>UMP residue</name>
        <dbReference type="ChEBI" id="CHEBI:65315"/>
    </ligandPart>
</feature>
<feature type="binding site" evidence="12 13 14 17 18 19 21 23">
    <location>
        <begin position="84"/>
        <end position="85"/>
    </location>
    <ligand>
        <name>RNA</name>
        <dbReference type="ChEBI" id="CHEBI:33697"/>
    </ligand>
    <ligandPart>
        <name>UMP residue</name>
        <dbReference type="ChEBI" id="CHEBI:65315"/>
    </ligandPart>
</feature>
<feature type="binding site" evidence="12 13 14 17 18 19 20 21 23">
    <location>
        <begin position="88"/>
        <end position="89"/>
    </location>
    <ligand>
        <name>RNA</name>
        <dbReference type="ChEBI" id="CHEBI:33697"/>
    </ligand>
    <ligandPart>
        <name>UMP residue</name>
        <dbReference type="ChEBI" id="CHEBI:65315"/>
    </ligandPart>
</feature>
<feature type="site" description="Involved in thermostability" evidence="7">
    <location>
        <position position="102"/>
    </location>
</feature>
<feature type="site" description="Involved in thermostability" evidence="7">
    <location>
        <position position="103"/>
    </location>
</feature>
<feature type="site" description="Involved in thermostability" evidence="7">
    <location>
        <position position="106"/>
    </location>
</feature>
<feature type="site" description="Involved in thermostability" evidence="7">
    <location>
        <position position="126"/>
    </location>
</feature>
<feature type="site" description="Involved in thermostability" evidence="7">
    <location>
        <position position="128"/>
    </location>
</feature>
<feature type="site" description="Involved in thermostability" evidence="7">
    <location>
        <position position="145"/>
    </location>
</feature>
<feature type="site" description="Involved in thermostability" evidence="7">
    <location>
        <position position="163"/>
    </location>
</feature>
<feature type="site" description="Involved in thermostability" evidence="7">
    <location>
        <position position="166"/>
    </location>
</feature>
<feature type="site" description="Involved in thermostability" evidence="7">
    <location>
        <position position="191"/>
    </location>
</feature>
<feature type="disulfide bond" evidence="4 5 6 7 16 17 18 19 20 21 22 23">
    <location>
        <begin position="15"/>
        <end position="23"/>
    </location>
</feature>
<feature type="disulfide bond" evidence="4 5 6 7 16 17 18 19 20 21 22 23">
    <location>
        <begin position="48"/>
        <end position="92"/>
    </location>
</feature>
<feature type="disulfide bond" evidence="4 5 6 7 16 17 18 19 20 21 22 23">
    <location>
        <begin position="152"/>
        <end position="185"/>
    </location>
</feature>
<feature type="disulfide bond" evidence="4 5 6 7 16 17 18 19 20 21 22 23">
    <location>
        <begin position="169"/>
        <end position="180"/>
    </location>
</feature>
<feature type="mutagenesis site" description="Altered substrate specificity from uridine specific to guanosine specific." evidence="6">
    <original>N</original>
    <variation>S</variation>
    <location>
        <position position="72"/>
    </location>
</feature>
<feature type="mutagenesis site" description="Decreased catalytic efficiency and affinity for uridine (CpU substrate). Altered substrate specificity from uridine specific to guanosine specific." evidence="5 6">
    <original>N</original>
    <variation>T</variation>
    <location>
        <position position="72"/>
    </location>
</feature>
<feature type="mutagenesis site" description="Normal catalytic efficiency and affinity for uridine (CpU substrate)." evidence="5">
    <original>V</original>
    <variation>L</variation>
    <location>
        <position position="73"/>
    </location>
</feature>
<feature type="mutagenesis site" description="Decreased affinity for uridine (CpU substrate)." evidence="5">
    <original>L</original>
    <variation>A</variation>
    <location>
        <position position="74"/>
    </location>
</feature>
<feature type="mutagenesis site" description="Slightly decreased catalytic efficiency for uridine (CpU substrate)." evidence="5">
    <original>R</original>
    <variation>S</variation>
    <location>
        <position position="75"/>
    </location>
</feature>
<feature type="mutagenesis site" description="Decreased thermostability (at 47-58 degrees Celsius)." evidence="7">
    <original>Y</original>
    <variation>A</variation>
    <location>
        <position position="102"/>
    </location>
</feature>
<feature type="mutagenesis site" description="Decreased thermostability (at 47-58 degrees Celsius)." evidence="7">
    <original>F</original>
    <variation>A</variation>
    <location>
        <position position="103"/>
    </location>
</feature>
<feature type="mutagenesis site" description="Decreased thermostability (at 47-58 degrees Celsius)." evidence="7">
    <original>A</original>
    <variation>L</variation>
    <location>
        <position position="106"/>
    </location>
</feature>
<feature type="mutagenesis site" description="Slightly decreased thermostability (at 47-58 degrees Celsius)." evidence="7">
    <original>P</original>
    <variation>A</variation>
    <location>
        <position position="126"/>
    </location>
</feature>
<feature type="mutagenesis site" description="Slightly decreased thermostability (at 47-58 degrees Celsius)." evidence="7">
    <original>G</original>
    <variation>A</variation>
    <location>
        <position position="128"/>
    </location>
</feature>
<feature type="mutagenesis site" description="Slightly decreased thermostability (at 47-58 degrees Celsius)." evidence="7">
    <original>G</original>
    <variation>A</variation>
    <location>
        <position position="145"/>
    </location>
</feature>
<feature type="mutagenesis site" description="Slightly decreased thermostability (at 47-58 degrees Celsius)." evidence="7">
    <original>V</original>
    <variation>A</variation>
    <location>
        <position position="166"/>
    </location>
</feature>
<feature type="mutagenesis site" description="Decreased thermostability (at 47-58 degrees Celsius)." evidence="7">
    <original>F</original>
    <variation>A</variation>
    <location>
        <position position="191"/>
    </location>
</feature>
<feature type="strand" evidence="24">
    <location>
        <begin position="3"/>
        <end position="9"/>
    </location>
</feature>
<feature type="helix" evidence="24">
    <location>
        <begin position="11"/>
        <end position="16"/>
    </location>
</feature>
<feature type="helix" evidence="24">
    <location>
        <begin position="24"/>
        <end position="27"/>
    </location>
</feature>
<feature type="strand" evidence="24">
    <location>
        <begin position="32"/>
        <end position="40"/>
    </location>
</feature>
<feature type="helix" evidence="24">
    <location>
        <begin position="56"/>
        <end position="62"/>
    </location>
</feature>
<feature type="helix" evidence="24">
    <location>
        <begin position="63"/>
        <end position="69"/>
    </location>
</feature>
<feature type="strand" evidence="24">
    <location>
        <begin position="73"/>
        <end position="76"/>
    </location>
</feature>
<feature type="helix" evidence="24">
    <location>
        <begin position="78"/>
        <end position="88"/>
    </location>
</feature>
<feature type="helix" evidence="24">
    <location>
        <begin position="90"/>
        <end position="93"/>
    </location>
</feature>
<feature type="turn" evidence="24">
    <location>
        <begin position="94"/>
        <end position="96"/>
    </location>
</feature>
<feature type="helix" evidence="24">
    <location>
        <begin position="99"/>
        <end position="111"/>
    </location>
</feature>
<feature type="helix" evidence="24">
    <location>
        <begin position="115"/>
        <end position="119"/>
    </location>
</feature>
<feature type="helix" evidence="24">
    <location>
        <begin position="120"/>
        <end position="122"/>
    </location>
</feature>
<feature type="strand" evidence="24">
    <location>
        <begin position="127"/>
        <end position="132"/>
    </location>
</feature>
<feature type="helix" evidence="24">
    <location>
        <begin position="133"/>
        <end position="144"/>
    </location>
</feature>
<feature type="strand" evidence="24">
    <location>
        <begin position="149"/>
        <end position="154"/>
    </location>
</feature>
<feature type="turn" evidence="24">
    <location>
        <begin position="156"/>
        <end position="158"/>
    </location>
</feature>
<feature type="strand" evidence="24">
    <location>
        <begin position="161"/>
        <end position="171"/>
    </location>
</feature>
<feature type="strand" evidence="24">
    <location>
        <begin position="174"/>
        <end position="178"/>
    </location>
</feature>
<feature type="strand" evidence="24">
    <location>
        <begin position="187"/>
        <end position="191"/>
    </location>
</feature>
<sequence>FDSFWFVQQWPPAVCSFQKSGSCPGSGLRTFTIHGLWPQGSGTSLTNCPQGSPFDITKISHLQSQLNTLWPNVLRANNQQFWSHEWTKHGTCSESTFNQAAYFKLAVDMRNNYDIIGALRPHAAGPNGRTKSRQAIKGFLKAKFGKFPGLRCRTDPQTKVSYLVQVVACFAQDGSTLIDCTRDTCGANFIF</sequence>
<proteinExistence type="evidence at protein level"/>
<dbReference type="EC" id="4.6.1.19" evidence="2 3 5"/>
<dbReference type="PIR" id="S17505">
    <property type="entry name" value="S17505"/>
</dbReference>
<dbReference type="PDB" id="1BK7">
    <property type="method" value="X-ray"/>
    <property type="resolution" value="1.75 A"/>
    <property type="chains" value="A=1-191"/>
</dbReference>
<dbReference type="PDB" id="1J1F">
    <property type="method" value="X-ray"/>
    <property type="resolution" value="1.60 A"/>
    <property type="chains" value="A=1-191"/>
</dbReference>
<dbReference type="PDB" id="1J1G">
    <property type="method" value="X-ray"/>
    <property type="resolution" value="1.60 A"/>
    <property type="chains" value="A=2-191"/>
</dbReference>
<dbReference type="PDB" id="1UCA">
    <property type="method" value="X-ray"/>
    <property type="resolution" value="1.48 A"/>
    <property type="chains" value="A=1-191"/>
</dbReference>
<dbReference type="PDB" id="1UCC">
    <property type="method" value="X-ray"/>
    <property type="resolution" value="1.77 A"/>
    <property type="chains" value="A=1-191"/>
</dbReference>
<dbReference type="PDB" id="1UCD">
    <property type="method" value="X-ray"/>
    <property type="resolution" value="1.30 A"/>
    <property type="chains" value="A=1-191"/>
</dbReference>
<dbReference type="PDB" id="1UCG">
    <property type="method" value="X-ray"/>
    <property type="resolution" value="1.65 A"/>
    <property type="chains" value="A/B=2-191"/>
</dbReference>
<dbReference type="PDB" id="1V9H">
    <property type="method" value="X-ray"/>
    <property type="resolution" value="2.00 A"/>
    <property type="chains" value="A=1-191"/>
</dbReference>
<dbReference type="PDBsum" id="1BK7"/>
<dbReference type="PDBsum" id="1J1F"/>
<dbReference type="PDBsum" id="1J1G"/>
<dbReference type="PDBsum" id="1UCA"/>
<dbReference type="PDBsum" id="1UCC"/>
<dbReference type="PDBsum" id="1UCD"/>
<dbReference type="PDBsum" id="1UCG"/>
<dbReference type="PDBsum" id="1V9H"/>
<dbReference type="SMR" id="P23540"/>
<dbReference type="BRENDA" id="4.6.1.19">
    <property type="organism ID" value="3398"/>
</dbReference>
<dbReference type="EvolutionaryTrace" id="P23540"/>
<dbReference type="Proteomes" id="UP000504603">
    <property type="component" value="Unplaced"/>
</dbReference>
<dbReference type="GO" id="GO:0005576">
    <property type="term" value="C:extracellular region"/>
    <property type="evidence" value="ECO:0007669"/>
    <property type="project" value="TreeGrafter"/>
</dbReference>
<dbReference type="GO" id="GO:0033897">
    <property type="term" value="F:ribonuclease T2 activity"/>
    <property type="evidence" value="ECO:0007669"/>
    <property type="project" value="UniProtKB-EC"/>
</dbReference>
<dbReference type="GO" id="GO:0003723">
    <property type="term" value="F:RNA binding"/>
    <property type="evidence" value="ECO:0007669"/>
    <property type="project" value="InterPro"/>
</dbReference>
<dbReference type="GO" id="GO:0006401">
    <property type="term" value="P:RNA catabolic process"/>
    <property type="evidence" value="ECO:0007669"/>
    <property type="project" value="TreeGrafter"/>
</dbReference>
<dbReference type="CDD" id="cd01061">
    <property type="entry name" value="RNase_T2_euk"/>
    <property type="match status" value="1"/>
</dbReference>
<dbReference type="Gene3D" id="3.90.730.10">
    <property type="entry name" value="Ribonuclease T2-like"/>
    <property type="match status" value="1"/>
</dbReference>
<dbReference type="InterPro" id="IPR033697">
    <property type="entry name" value="Ribonuclease_T2_eukaryotic"/>
</dbReference>
<dbReference type="InterPro" id="IPR001568">
    <property type="entry name" value="RNase_T2-like"/>
</dbReference>
<dbReference type="InterPro" id="IPR036430">
    <property type="entry name" value="RNase_T2-like_sf"/>
</dbReference>
<dbReference type="InterPro" id="IPR018188">
    <property type="entry name" value="RNase_T2_His_AS_1"/>
</dbReference>
<dbReference type="InterPro" id="IPR033130">
    <property type="entry name" value="RNase_T2_His_AS_2"/>
</dbReference>
<dbReference type="PANTHER" id="PTHR11240:SF75">
    <property type="entry name" value="RIBONUCLEASE 3"/>
    <property type="match status" value="1"/>
</dbReference>
<dbReference type="PANTHER" id="PTHR11240">
    <property type="entry name" value="RIBONUCLEASE T2"/>
    <property type="match status" value="1"/>
</dbReference>
<dbReference type="Pfam" id="PF00445">
    <property type="entry name" value="Ribonuclease_T2"/>
    <property type="match status" value="1"/>
</dbReference>
<dbReference type="SUPFAM" id="SSF55895">
    <property type="entry name" value="Ribonuclease Rh-like"/>
    <property type="match status" value="1"/>
</dbReference>
<dbReference type="PROSITE" id="PS00530">
    <property type="entry name" value="RNASE_T2_1"/>
    <property type="match status" value="1"/>
</dbReference>
<dbReference type="PROSITE" id="PS00531">
    <property type="entry name" value="RNASE_T2_2"/>
    <property type="match status" value="1"/>
</dbReference>
<evidence type="ECO:0000255" key="1"/>
<evidence type="ECO:0000255" key="2">
    <source>
        <dbReference type="PROSITE-ProRule" id="PRU10045"/>
    </source>
</evidence>
<evidence type="ECO:0000255" key="3">
    <source>
        <dbReference type="PROSITE-ProRule" id="PRU10046"/>
    </source>
</evidence>
<evidence type="ECO:0000269" key="4">
    <source>
    </source>
</evidence>
<evidence type="ECO:0000269" key="5">
    <source>
    </source>
</evidence>
<evidence type="ECO:0000269" key="6">
    <source>
    </source>
</evidence>
<evidence type="ECO:0000269" key="7">
    <source>
    </source>
</evidence>
<evidence type="ECO:0000303" key="8">
    <source>
    </source>
</evidence>
<evidence type="ECO:0000303" key="9">
    <source>
    </source>
</evidence>
<evidence type="ECO:0000305" key="10"/>
<evidence type="ECO:0000305" key="11">
    <source>
    </source>
</evidence>
<evidence type="ECO:0000305" key="12">
    <source>
    </source>
</evidence>
<evidence type="ECO:0000305" key="13">
    <source>
    </source>
</evidence>
<evidence type="ECO:0000305" key="14">
    <source>
    </source>
</evidence>
<evidence type="ECO:0000305" key="15">
    <source>
    </source>
</evidence>
<evidence type="ECO:0007744" key="16">
    <source>
        <dbReference type="PDB" id="1BK7"/>
    </source>
</evidence>
<evidence type="ECO:0007744" key="17">
    <source>
        <dbReference type="PDB" id="1J1F"/>
    </source>
</evidence>
<evidence type="ECO:0007744" key="18">
    <source>
        <dbReference type="PDB" id="1J1G"/>
    </source>
</evidence>
<evidence type="ECO:0007744" key="19">
    <source>
        <dbReference type="PDB" id="1UCA"/>
    </source>
</evidence>
<evidence type="ECO:0007744" key="20">
    <source>
        <dbReference type="PDB" id="1UCC"/>
    </source>
</evidence>
<evidence type="ECO:0007744" key="21">
    <source>
        <dbReference type="PDB" id="1UCD"/>
    </source>
</evidence>
<evidence type="ECO:0007744" key="22">
    <source>
        <dbReference type="PDB" id="1UCG"/>
    </source>
</evidence>
<evidence type="ECO:0007744" key="23">
    <source>
        <dbReference type="PDB" id="1V9H"/>
    </source>
</evidence>
<evidence type="ECO:0007829" key="24">
    <source>
        <dbReference type="PDB" id="1UCD"/>
    </source>
</evidence>
<organism>
    <name type="scientific">Momordica charantia</name>
    <name type="common">Bitter gourd</name>
    <name type="synonym">Balsam pear</name>
    <dbReference type="NCBI Taxonomy" id="3673"/>
    <lineage>
        <taxon>Eukaryota</taxon>
        <taxon>Viridiplantae</taxon>
        <taxon>Streptophyta</taxon>
        <taxon>Embryophyta</taxon>
        <taxon>Tracheophyta</taxon>
        <taxon>Spermatophyta</taxon>
        <taxon>Magnoliopsida</taxon>
        <taxon>eudicotyledons</taxon>
        <taxon>Gunneridae</taxon>
        <taxon>Pentapetalae</taxon>
        <taxon>rosids</taxon>
        <taxon>fabids</taxon>
        <taxon>Cucurbitales</taxon>
        <taxon>Cucurbitaceae</taxon>
        <taxon>Momordiceae</taxon>
        <taxon>Momordica</taxon>
    </lineage>
</organism>
<reference key="1">
    <citation type="journal article" date="1991" name="FEBS Lett.">
        <title>The complete amino acid sequence of ribonuclease from the seeds of bitter gourd (Momordica charantia).</title>
        <authorList>
            <person name="Ide H."/>
            <person name="Kimura M."/>
            <person name="Arai M."/>
            <person name="Funatsu G."/>
        </authorList>
    </citation>
    <scope>PROTEIN SEQUENCE</scope>
    <source>
        <tissue>Seed</tissue>
    </source>
</reference>
<reference key="2">
    <citation type="journal article" date="1991" name="FEBS Lett.">
        <authorList>
            <person name="Ide H."/>
            <person name="Kimura M."/>
            <person name="Arai M."/>
            <person name="Funatsu G."/>
        </authorList>
    </citation>
    <scope>ERRATUM OF PUBMED:2060635</scope>
</reference>
<reference key="3">
    <citation type="journal article" date="1999" name="Biochim. Biophys. Acta">
        <title>Crystal structure of a ribonuclease from the seeds of bitter gourd (Momordica charantia) at 1.75 A resolution.</title>
        <authorList>
            <person name="Nakagawa A."/>
            <person name="Tanaka I."/>
            <person name="Sakai R."/>
            <person name="Nakashima T."/>
            <person name="Funatsu G."/>
            <person name="Kimura M."/>
        </authorList>
    </citation>
    <scope>X-RAY CRYSTALLOGRAPHY (1.75 ANGSTROMS)</scope>
    <scope>DISULFIDE BONDS</scope>
    <scope>ACTIVE SITES</scope>
</reference>
<reference key="4">
    <citation type="journal article" date="2000" name="Biochem. Biophys. Res. Commun.">
        <title>Crystal structures of the ribonuclease MC1 from bitter gourd seeds, complexed with 2'-UMP or 3'-UMP, reveal structural basis for uridine specificity.</title>
        <authorList>
            <person name="Suzuki A."/>
            <person name="Yao M."/>
            <person name="Tanaka I."/>
            <person name="Numata T."/>
            <person name="Kikukawa S."/>
            <person name="Yamasaki N."/>
            <person name="Kimura M."/>
        </authorList>
    </citation>
    <scope>X-RAY CRYSTALLOGRAPHY (1.48 ANGSTROMS) IN COMPLEX WITH 3'-UMP AND URIDINE 2'-PHOSPHATE</scope>
    <scope>DISULFIDE BONDS</scope>
    <scope>FUNCTION</scope>
    <scope>MUTAGENESIS OF ASN-72; VAL-73; LEU-74 AND ARG-75</scope>
    <scope>CATALYTIC ACTIVITY</scope>
    <scope>BIOPHYSICOCHEMICAL PROPERTIES</scope>
</reference>
<reference key="5">
    <citation type="journal article" date="2003" name="Biochemistry">
        <title>Crystal structures of the ribonuclease MC1 mutants N71T and N71S in complex with 5'-GMP: structural basis for alterations in substrate specificity.</title>
        <authorList>
            <person name="Numata T."/>
            <person name="Suzuki A."/>
            <person name="Kakuta Y."/>
            <person name="Kimura K."/>
            <person name="Yao M."/>
            <person name="Tanaka I."/>
            <person name="Yoshida Y."/>
            <person name="Ueda T."/>
            <person name="Kimura M."/>
        </authorList>
    </citation>
    <scope>X-RAY CRYSTALLOGRAPHY (1.30 ANGSTROMS) IN COMPLEX WITH GMP AND UMP</scope>
    <scope>DISULFIDE BONDS</scope>
    <scope>MUTAGENESIS OF ASN-72</scope>
</reference>
<reference key="6">
    <citation type="journal article" date="2004" name="Biosci. Biotechnol. Biochem.">
        <title>Amino acids conserved at the C-terminal half of the ribonuclease T2 family contribute to protein stability of the enzymes.</title>
        <authorList>
            <person name="Kimura K."/>
            <person name="Numata T."/>
            <person name="Kakuta Y."/>
            <person name="Kimura M."/>
        </authorList>
    </citation>
    <scope>X-RAY CRYSTALLOGRAPHY (2.00 ANGSTROMS) IN COMPLEX WITH UMP</scope>
    <scope>DISULFIDE BONDS</scope>
    <scope>MUTAGENESIS OF TYR-102; PHE-103; ALA-106; PRO-126; GLY-128; GLY-145; VAL-166 AND PHE-191</scope>
</reference>
<comment type="function">
    <text evidence="5">Ribonuclease cleaving preferentially the 5'-side of uridine.</text>
</comment>
<comment type="catalytic activity">
    <reaction evidence="2 3 5">
        <text>a ribonucleotidyl-ribonucleotide-RNA + H2O = a 3'-end 3'-phospho-ribonucleotide-RNA + a 5'-end dephospho-ribonucleoside-RNA + H(+)</text>
        <dbReference type="Rhea" id="RHEA:68052"/>
        <dbReference type="Rhea" id="RHEA-COMP:10463"/>
        <dbReference type="Rhea" id="RHEA-COMP:13936"/>
        <dbReference type="Rhea" id="RHEA-COMP:17355"/>
        <dbReference type="ChEBI" id="CHEBI:15377"/>
        <dbReference type="ChEBI" id="CHEBI:15378"/>
        <dbReference type="ChEBI" id="CHEBI:83062"/>
        <dbReference type="ChEBI" id="CHEBI:138284"/>
        <dbReference type="ChEBI" id="CHEBI:173118"/>
        <dbReference type="EC" id="4.6.1.19"/>
    </reaction>
</comment>
<comment type="biophysicochemical properties">
    <kinetics>
        <KM evidence="5">1.38 mM for CpU</KM>
        <text evidence="5">kcat is 745 min(-1) with CpU as substrate.</text>
    </kinetics>
</comment>
<comment type="miscellaneous">
    <text evidence="15">Has a remarkably high specificity toward CpU, ApU, and UpU.</text>
</comment>
<comment type="similarity">
    <text evidence="10">Belongs to the RNase T2 family.</text>
</comment>
<gene>
    <name evidence="8" type="primary">MC1</name>
</gene>